<name>HISX_BACFN</name>
<reference key="1">
    <citation type="journal article" date="2005" name="Science">
        <title>Extensive DNA inversions in the B. fragilis genome control variable gene expression.</title>
        <authorList>
            <person name="Cerdeno-Tarraga A.-M."/>
            <person name="Patrick S."/>
            <person name="Crossman L.C."/>
            <person name="Blakely G."/>
            <person name="Abratt V."/>
            <person name="Lennard N."/>
            <person name="Poxton I."/>
            <person name="Duerden B."/>
            <person name="Harris B."/>
            <person name="Quail M.A."/>
            <person name="Barron A."/>
            <person name="Clark L."/>
            <person name="Corton C."/>
            <person name="Doggett J."/>
            <person name="Holden M.T.G."/>
            <person name="Larke N."/>
            <person name="Line A."/>
            <person name="Lord A."/>
            <person name="Norbertczak H."/>
            <person name="Ormond D."/>
            <person name="Price C."/>
            <person name="Rabbinowitsch E."/>
            <person name="Woodward J."/>
            <person name="Barrell B.G."/>
            <person name="Parkhill J."/>
        </authorList>
    </citation>
    <scope>NUCLEOTIDE SEQUENCE [LARGE SCALE GENOMIC DNA]</scope>
    <source>
        <strain>ATCC 25285 / DSM 2151 / CCUG 4856 / JCM 11019 / LMG 10263 / NCTC 9343 / Onslow / VPI 2553 / EN-2</strain>
    </source>
</reference>
<gene>
    <name evidence="1" type="primary">hisD</name>
    <name type="ordered locus">BF3029</name>
</gene>
<comment type="function">
    <text evidence="1">Catalyzes the sequential NAD-dependent oxidations of L-histidinol to L-histidinaldehyde and then to L-histidine.</text>
</comment>
<comment type="catalytic activity">
    <reaction evidence="1">
        <text>L-histidinol + 2 NAD(+) + H2O = L-histidine + 2 NADH + 3 H(+)</text>
        <dbReference type="Rhea" id="RHEA:20641"/>
        <dbReference type="ChEBI" id="CHEBI:15377"/>
        <dbReference type="ChEBI" id="CHEBI:15378"/>
        <dbReference type="ChEBI" id="CHEBI:57540"/>
        <dbReference type="ChEBI" id="CHEBI:57595"/>
        <dbReference type="ChEBI" id="CHEBI:57699"/>
        <dbReference type="ChEBI" id="CHEBI:57945"/>
        <dbReference type="EC" id="1.1.1.23"/>
    </reaction>
</comment>
<comment type="cofactor">
    <cofactor evidence="1">
        <name>Zn(2+)</name>
        <dbReference type="ChEBI" id="CHEBI:29105"/>
    </cofactor>
    <text evidence="1">Binds 1 zinc ion per subunit.</text>
</comment>
<comment type="pathway">
    <text evidence="1">Amino-acid biosynthesis; L-histidine biosynthesis; L-histidine from 5-phospho-alpha-D-ribose 1-diphosphate: step 9/9.</text>
</comment>
<comment type="similarity">
    <text evidence="1">Belongs to the histidinol dehydrogenase family.</text>
</comment>
<sequence length="428" mass="46535">MKLIKYPDRSQWNEILKRPVLETENLFDTVRNIINRVRAGGDRVVMEYEAVFDKAELTSLAVTSAEIEEAEKEVPIELKAAIYLAKRNIETFHSAQRFEGKKVDTMEGVTCWQKAVAIEKVGLYIPGGTAPLFSTVLMLAIPAKIAGCKEIVLCTPPDKNGKVHPAILFAARLAGVSKIFKAGGVQAIAAMAYGTESIPKVYKIFGPGNQYVTAAKQLVSLRDVAIDMPAGPSEVEVLADESANPVFVAADLLSQAEHGVDSQAMLVTTSEKLQTEVVYEVERQLGYLTRRDIAEKSLASSKLILVKDMEEALELTNAYAPEHLIIETKDYMEVAGQIVNAGSVFLGAFSPESAGDYASGTNHTLPTNGYAKAYSGVSLDSFIRKITFQEILPSGMSAIGPAIEVMAANEHLDAHKNAVTVRLEEIRK</sequence>
<dbReference type="EC" id="1.1.1.23" evidence="1"/>
<dbReference type="EMBL" id="CR626927">
    <property type="protein sequence ID" value="CAH08724.1"/>
    <property type="molecule type" value="Genomic_DNA"/>
</dbReference>
<dbReference type="RefSeq" id="WP_010993237.1">
    <property type="nucleotide sequence ID" value="NZ_UFTH01000001.1"/>
</dbReference>
<dbReference type="SMR" id="Q5LAZ8"/>
<dbReference type="PaxDb" id="272559-BF9343_2943"/>
<dbReference type="GeneID" id="60366535"/>
<dbReference type="KEGG" id="bfs:BF9343_2943"/>
<dbReference type="eggNOG" id="COG0141">
    <property type="taxonomic scope" value="Bacteria"/>
</dbReference>
<dbReference type="HOGENOM" id="CLU_006732_3_0_10"/>
<dbReference type="UniPathway" id="UPA00031">
    <property type="reaction ID" value="UER00014"/>
</dbReference>
<dbReference type="Proteomes" id="UP000006731">
    <property type="component" value="Chromosome"/>
</dbReference>
<dbReference type="GO" id="GO:0005829">
    <property type="term" value="C:cytosol"/>
    <property type="evidence" value="ECO:0007669"/>
    <property type="project" value="TreeGrafter"/>
</dbReference>
<dbReference type="GO" id="GO:0004399">
    <property type="term" value="F:histidinol dehydrogenase activity"/>
    <property type="evidence" value="ECO:0007669"/>
    <property type="project" value="UniProtKB-UniRule"/>
</dbReference>
<dbReference type="GO" id="GO:0051287">
    <property type="term" value="F:NAD binding"/>
    <property type="evidence" value="ECO:0007669"/>
    <property type="project" value="InterPro"/>
</dbReference>
<dbReference type="GO" id="GO:0008270">
    <property type="term" value="F:zinc ion binding"/>
    <property type="evidence" value="ECO:0007669"/>
    <property type="project" value="UniProtKB-UniRule"/>
</dbReference>
<dbReference type="GO" id="GO:0000105">
    <property type="term" value="P:L-histidine biosynthetic process"/>
    <property type="evidence" value="ECO:0007669"/>
    <property type="project" value="UniProtKB-UniRule"/>
</dbReference>
<dbReference type="CDD" id="cd06572">
    <property type="entry name" value="Histidinol_dh"/>
    <property type="match status" value="1"/>
</dbReference>
<dbReference type="FunFam" id="3.40.50.1980:FF:000001">
    <property type="entry name" value="Histidinol dehydrogenase"/>
    <property type="match status" value="1"/>
</dbReference>
<dbReference type="FunFam" id="3.40.50.1980:FF:000002">
    <property type="entry name" value="Histidinol dehydrogenase, chloroplastic"/>
    <property type="match status" value="1"/>
</dbReference>
<dbReference type="Gene3D" id="1.20.5.1300">
    <property type="match status" value="1"/>
</dbReference>
<dbReference type="Gene3D" id="3.40.50.1980">
    <property type="entry name" value="Nitrogenase molybdenum iron protein domain"/>
    <property type="match status" value="2"/>
</dbReference>
<dbReference type="HAMAP" id="MF_01024">
    <property type="entry name" value="HisD"/>
    <property type="match status" value="1"/>
</dbReference>
<dbReference type="InterPro" id="IPR016161">
    <property type="entry name" value="Ald_DH/histidinol_DH"/>
</dbReference>
<dbReference type="InterPro" id="IPR001692">
    <property type="entry name" value="Histidinol_DH_CS"/>
</dbReference>
<dbReference type="InterPro" id="IPR022695">
    <property type="entry name" value="Histidinol_DH_monofunct"/>
</dbReference>
<dbReference type="InterPro" id="IPR012131">
    <property type="entry name" value="Hstdl_DH"/>
</dbReference>
<dbReference type="NCBIfam" id="TIGR00069">
    <property type="entry name" value="hisD"/>
    <property type="match status" value="1"/>
</dbReference>
<dbReference type="PANTHER" id="PTHR21256:SF2">
    <property type="entry name" value="HISTIDINE BIOSYNTHESIS TRIFUNCTIONAL PROTEIN"/>
    <property type="match status" value="1"/>
</dbReference>
<dbReference type="PANTHER" id="PTHR21256">
    <property type="entry name" value="HISTIDINOL DEHYDROGENASE HDH"/>
    <property type="match status" value="1"/>
</dbReference>
<dbReference type="Pfam" id="PF00815">
    <property type="entry name" value="Histidinol_dh"/>
    <property type="match status" value="1"/>
</dbReference>
<dbReference type="PIRSF" id="PIRSF000099">
    <property type="entry name" value="Histidinol_dh"/>
    <property type="match status" value="1"/>
</dbReference>
<dbReference type="PRINTS" id="PR00083">
    <property type="entry name" value="HOLDHDRGNASE"/>
</dbReference>
<dbReference type="SUPFAM" id="SSF53720">
    <property type="entry name" value="ALDH-like"/>
    <property type="match status" value="1"/>
</dbReference>
<dbReference type="PROSITE" id="PS00611">
    <property type="entry name" value="HISOL_DEHYDROGENASE"/>
    <property type="match status" value="1"/>
</dbReference>
<keyword id="KW-0028">Amino-acid biosynthesis</keyword>
<keyword id="KW-0368">Histidine biosynthesis</keyword>
<keyword id="KW-0479">Metal-binding</keyword>
<keyword id="KW-0520">NAD</keyword>
<keyword id="KW-0560">Oxidoreductase</keyword>
<keyword id="KW-0862">Zinc</keyword>
<evidence type="ECO:0000255" key="1">
    <source>
        <dbReference type="HAMAP-Rule" id="MF_01024"/>
    </source>
</evidence>
<organism>
    <name type="scientific">Bacteroides fragilis (strain ATCC 25285 / DSM 2151 / CCUG 4856 / JCM 11019 / LMG 10263 / NCTC 9343 / Onslow / VPI 2553 / EN-2)</name>
    <dbReference type="NCBI Taxonomy" id="272559"/>
    <lineage>
        <taxon>Bacteria</taxon>
        <taxon>Pseudomonadati</taxon>
        <taxon>Bacteroidota</taxon>
        <taxon>Bacteroidia</taxon>
        <taxon>Bacteroidales</taxon>
        <taxon>Bacteroidaceae</taxon>
        <taxon>Bacteroides</taxon>
    </lineage>
</organism>
<feature type="chain" id="PRO_0000135731" description="Histidinol dehydrogenase">
    <location>
        <begin position="1"/>
        <end position="428"/>
    </location>
</feature>
<feature type="active site" description="Proton acceptor" evidence="1">
    <location>
        <position position="322"/>
    </location>
</feature>
<feature type="active site" description="Proton acceptor" evidence="1">
    <location>
        <position position="323"/>
    </location>
</feature>
<feature type="binding site" evidence="1">
    <location>
        <position position="124"/>
    </location>
    <ligand>
        <name>NAD(+)</name>
        <dbReference type="ChEBI" id="CHEBI:57540"/>
    </ligand>
</feature>
<feature type="binding site" evidence="1">
    <location>
        <position position="186"/>
    </location>
    <ligand>
        <name>NAD(+)</name>
        <dbReference type="ChEBI" id="CHEBI:57540"/>
    </ligand>
</feature>
<feature type="binding site" evidence="1">
    <location>
        <position position="209"/>
    </location>
    <ligand>
        <name>NAD(+)</name>
        <dbReference type="ChEBI" id="CHEBI:57540"/>
    </ligand>
</feature>
<feature type="binding site" evidence="1">
    <location>
        <position position="233"/>
    </location>
    <ligand>
        <name>substrate</name>
    </ligand>
</feature>
<feature type="binding site" evidence="1">
    <location>
        <position position="255"/>
    </location>
    <ligand>
        <name>substrate</name>
    </ligand>
</feature>
<feature type="binding site" evidence="1">
    <location>
        <position position="255"/>
    </location>
    <ligand>
        <name>Zn(2+)</name>
        <dbReference type="ChEBI" id="CHEBI:29105"/>
    </ligand>
</feature>
<feature type="binding site" evidence="1">
    <location>
        <position position="258"/>
    </location>
    <ligand>
        <name>substrate</name>
    </ligand>
</feature>
<feature type="binding site" evidence="1">
    <location>
        <position position="258"/>
    </location>
    <ligand>
        <name>Zn(2+)</name>
        <dbReference type="ChEBI" id="CHEBI:29105"/>
    </ligand>
</feature>
<feature type="binding site" evidence="1">
    <location>
        <position position="323"/>
    </location>
    <ligand>
        <name>substrate</name>
    </ligand>
</feature>
<feature type="binding site" evidence="1">
    <location>
        <position position="356"/>
    </location>
    <ligand>
        <name>substrate</name>
    </ligand>
</feature>
<feature type="binding site" evidence="1">
    <location>
        <position position="356"/>
    </location>
    <ligand>
        <name>Zn(2+)</name>
        <dbReference type="ChEBI" id="CHEBI:29105"/>
    </ligand>
</feature>
<feature type="binding site" evidence="1">
    <location>
        <position position="410"/>
    </location>
    <ligand>
        <name>substrate</name>
    </ligand>
</feature>
<feature type="binding site" evidence="1">
    <location>
        <position position="415"/>
    </location>
    <ligand>
        <name>substrate</name>
    </ligand>
</feature>
<feature type="binding site" evidence="1">
    <location>
        <position position="415"/>
    </location>
    <ligand>
        <name>Zn(2+)</name>
        <dbReference type="ChEBI" id="CHEBI:29105"/>
    </ligand>
</feature>
<accession>Q5LAZ8</accession>
<protein>
    <recommendedName>
        <fullName evidence="1">Histidinol dehydrogenase</fullName>
        <shortName evidence="1">HDH</shortName>
        <ecNumber evidence="1">1.1.1.23</ecNumber>
    </recommendedName>
</protein>
<proteinExistence type="inferred from homology"/>